<keyword id="KW-0963">Cytoplasm</keyword>
<keyword id="KW-0489">Methyltransferase</keyword>
<keyword id="KW-0545">Nucleotide biosynthesis</keyword>
<keyword id="KW-0808">Transferase</keyword>
<gene>
    <name evidence="1" type="primary">thyA</name>
    <name type="ordered locus">ABBFA_003076</name>
</gene>
<reference key="1">
    <citation type="journal article" date="2008" name="J. Bacteriol.">
        <title>Comparative genome sequence analysis of multidrug-resistant Acinetobacter baumannii.</title>
        <authorList>
            <person name="Adams M.D."/>
            <person name="Goglin K."/>
            <person name="Molyneaux N."/>
            <person name="Hujer K.M."/>
            <person name="Lavender H."/>
            <person name="Jamison J.J."/>
            <person name="MacDonald I.J."/>
            <person name="Martin K.M."/>
            <person name="Russo T."/>
            <person name="Campagnari A.A."/>
            <person name="Hujer A.M."/>
            <person name="Bonomo R.A."/>
            <person name="Gill S.R."/>
        </authorList>
    </citation>
    <scope>NUCLEOTIDE SEQUENCE [LARGE SCALE GENOMIC DNA]</scope>
    <source>
        <strain>AB307-0294</strain>
    </source>
</reference>
<dbReference type="EC" id="2.1.1.45" evidence="1"/>
<dbReference type="EMBL" id="CP001172">
    <property type="protein sequence ID" value="ACJ56883.1"/>
    <property type="molecule type" value="Genomic_DNA"/>
</dbReference>
<dbReference type="RefSeq" id="WP_001203170.1">
    <property type="nucleotide sequence ID" value="NZ_CP001172.1"/>
</dbReference>
<dbReference type="SMR" id="B7H0P4"/>
<dbReference type="HOGENOM" id="CLU_021669_0_0_6"/>
<dbReference type="UniPathway" id="UPA00575"/>
<dbReference type="Proteomes" id="UP000006924">
    <property type="component" value="Chromosome"/>
</dbReference>
<dbReference type="GO" id="GO:0005829">
    <property type="term" value="C:cytosol"/>
    <property type="evidence" value="ECO:0007669"/>
    <property type="project" value="TreeGrafter"/>
</dbReference>
<dbReference type="GO" id="GO:0004799">
    <property type="term" value="F:thymidylate synthase activity"/>
    <property type="evidence" value="ECO:0007669"/>
    <property type="project" value="UniProtKB-UniRule"/>
</dbReference>
<dbReference type="GO" id="GO:0006231">
    <property type="term" value="P:dTMP biosynthetic process"/>
    <property type="evidence" value="ECO:0007669"/>
    <property type="project" value="UniProtKB-UniRule"/>
</dbReference>
<dbReference type="GO" id="GO:0006235">
    <property type="term" value="P:dTTP biosynthetic process"/>
    <property type="evidence" value="ECO:0007669"/>
    <property type="project" value="UniProtKB-UniRule"/>
</dbReference>
<dbReference type="GO" id="GO:0032259">
    <property type="term" value="P:methylation"/>
    <property type="evidence" value="ECO:0007669"/>
    <property type="project" value="UniProtKB-KW"/>
</dbReference>
<dbReference type="CDD" id="cd00351">
    <property type="entry name" value="TS_Pyrimidine_HMase"/>
    <property type="match status" value="1"/>
</dbReference>
<dbReference type="FunFam" id="3.30.572.10:FF:000013">
    <property type="entry name" value="Thymidylate synthase"/>
    <property type="match status" value="1"/>
</dbReference>
<dbReference type="Gene3D" id="3.30.572.10">
    <property type="entry name" value="Thymidylate synthase/dCMP hydroxymethylase domain"/>
    <property type="match status" value="1"/>
</dbReference>
<dbReference type="HAMAP" id="MF_00008">
    <property type="entry name" value="Thymidy_synth_bact"/>
    <property type="match status" value="1"/>
</dbReference>
<dbReference type="InterPro" id="IPR045097">
    <property type="entry name" value="Thymidate_synth/dCMP_Mease"/>
</dbReference>
<dbReference type="InterPro" id="IPR023451">
    <property type="entry name" value="Thymidate_synth/dCMP_Mease_dom"/>
</dbReference>
<dbReference type="InterPro" id="IPR036926">
    <property type="entry name" value="Thymidate_synth/dCMP_Mease_sf"/>
</dbReference>
<dbReference type="InterPro" id="IPR000398">
    <property type="entry name" value="Thymidylate_synthase"/>
</dbReference>
<dbReference type="InterPro" id="IPR020940">
    <property type="entry name" value="Thymidylate_synthase_AS"/>
</dbReference>
<dbReference type="NCBIfam" id="NF002497">
    <property type="entry name" value="PRK01827.1-3"/>
    <property type="match status" value="1"/>
</dbReference>
<dbReference type="NCBIfam" id="NF002499">
    <property type="entry name" value="PRK01827.1-5"/>
    <property type="match status" value="1"/>
</dbReference>
<dbReference type="NCBIfam" id="TIGR03284">
    <property type="entry name" value="thym_sym"/>
    <property type="match status" value="1"/>
</dbReference>
<dbReference type="PANTHER" id="PTHR11548:SF9">
    <property type="entry name" value="THYMIDYLATE SYNTHASE"/>
    <property type="match status" value="1"/>
</dbReference>
<dbReference type="PANTHER" id="PTHR11548">
    <property type="entry name" value="THYMIDYLATE SYNTHASE 1"/>
    <property type="match status" value="1"/>
</dbReference>
<dbReference type="Pfam" id="PF00303">
    <property type="entry name" value="Thymidylat_synt"/>
    <property type="match status" value="1"/>
</dbReference>
<dbReference type="PRINTS" id="PR00108">
    <property type="entry name" value="THYMDSNTHASE"/>
</dbReference>
<dbReference type="SUPFAM" id="SSF55831">
    <property type="entry name" value="Thymidylate synthase/dCMP hydroxymethylase"/>
    <property type="match status" value="1"/>
</dbReference>
<dbReference type="PROSITE" id="PS00091">
    <property type="entry name" value="THYMIDYLATE_SYNTHASE"/>
    <property type="match status" value="1"/>
</dbReference>
<evidence type="ECO:0000255" key="1">
    <source>
        <dbReference type="HAMAP-Rule" id="MF_00008"/>
    </source>
</evidence>
<accession>B7H0P4</accession>
<proteinExistence type="inferred from homology"/>
<feature type="chain" id="PRO_1000197229" description="Thymidylate synthase">
    <location>
        <begin position="1"/>
        <end position="280"/>
    </location>
</feature>
<feature type="active site" description="Nucleophile" evidence="1">
    <location>
        <position position="162"/>
    </location>
</feature>
<feature type="binding site" description="in other chain" evidence="1">
    <location>
        <position position="21"/>
    </location>
    <ligand>
        <name>dUMP</name>
        <dbReference type="ChEBI" id="CHEBI:246422"/>
        <note>ligand shared between dimeric partners</note>
    </ligand>
</feature>
<feature type="binding site" evidence="1">
    <location>
        <position position="51"/>
    </location>
    <ligand>
        <name>(6R)-5,10-methylene-5,6,7,8-tetrahydrofolate</name>
        <dbReference type="ChEBI" id="CHEBI:15636"/>
    </ligand>
</feature>
<feature type="binding site" evidence="1">
    <location>
        <begin position="142"/>
        <end position="143"/>
    </location>
    <ligand>
        <name>dUMP</name>
        <dbReference type="ChEBI" id="CHEBI:246422"/>
        <note>ligand shared between dimeric partners</note>
    </ligand>
</feature>
<feature type="binding site" description="in other chain" evidence="1">
    <location>
        <begin position="182"/>
        <end position="185"/>
    </location>
    <ligand>
        <name>dUMP</name>
        <dbReference type="ChEBI" id="CHEBI:246422"/>
        <note>ligand shared between dimeric partners</note>
    </ligand>
</feature>
<feature type="binding site" evidence="1">
    <location>
        <position position="185"/>
    </location>
    <ligand>
        <name>(6R)-5,10-methylene-5,6,7,8-tetrahydrofolate</name>
        <dbReference type="ChEBI" id="CHEBI:15636"/>
    </ligand>
</feature>
<feature type="binding site" description="in other chain" evidence="1">
    <location>
        <position position="193"/>
    </location>
    <ligand>
        <name>dUMP</name>
        <dbReference type="ChEBI" id="CHEBI:246422"/>
        <note>ligand shared between dimeric partners</note>
    </ligand>
</feature>
<feature type="binding site" description="in other chain" evidence="1">
    <location>
        <begin position="223"/>
        <end position="225"/>
    </location>
    <ligand>
        <name>dUMP</name>
        <dbReference type="ChEBI" id="CHEBI:246422"/>
        <note>ligand shared between dimeric partners</note>
    </ligand>
</feature>
<feature type="binding site" evidence="1">
    <location>
        <position position="279"/>
    </location>
    <ligand>
        <name>(6R)-5,10-methylene-5,6,7,8-tetrahydrofolate</name>
        <dbReference type="ChEBI" id="CHEBI:15636"/>
    </ligand>
</feature>
<organism>
    <name type="scientific">Acinetobacter baumannii (strain AB307-0294)</name>
    <dbReference type="NCBI Taxonomy" id="557600"/>
    <lineage>
        <taxon>Bacteria</taxon>
        <taxon>Pseudomonadati</taxon>
        <taxon>Pseudomonadota</taxon>
        <taxon>Gammaproteobacteria</taxon>
        <taxon>Moraxellales</taxon>
        <taxon>Moraxellaceae</taxon>
        <taxon>Acinetobacter</taxon>
        <taxon>Acinetobacter calcoaceticus/baumannii complex</taxon>
    </lineage>
</organism>
<protein>
    <recommendedName>
        <fullName evidence="1">Thymidylate synthase</fullName>
        <shortName evidence="1">TS</shortName>
        <shortName evidence="1">TSase</shortName>
        <ecNumber evidence="1">2.1.1.45</ecNumber>
    </recommendedName>
</protein>
<comment type="function">
    <text evidence="1">Catalyzes the reductive methylation of 2'-deoxyuridine-5'-monophosphate (dUMP) to 2'-deoxythymidine-5'-monophosphate (dTMP) while utilizing 5,10-methylenetetrahydrofolate (mTHF) as the methyl donor and reductant in the reaction, yielding dihydrofolate (DHF) as a by-product. This enzymatic reaction provides an intracellular de novo source of dTMP, an essential precursor for DNA biosynthesis.</text>
</comment>
<comment type="catalytic activity">
    <reaction evidence="1">
        <text>dUMP + (6R)-5,10-methylene-5,6,7,8-tetrahydrofolate = 7,8-dihydrofolate + dTMP</text>
        <dbReference type="Rhea" id="RHEA:12104"/>
        <dbReference type="ChEBI" id="CHEBI:15636"/>
        <dbReference type="ChEBI" id="CHEBI:57451"/>
        <dbReference type="ChEBI" id="CHEBI:63528"/>
        <dbReference type="ChEBI" id="CHEBI:246422"/>
        <dbReference type="EC" id="2.1.1.45"/>
    </reaction>
</comment>
<comment type="pathway">
    <text evidence="1">Pyrimidine metabolism; dTTP biosynthesis.</text>
</comment>
<comment type="subunit">
    <text evidence="1">Homodimer.</text>
</comment>
<comment type="subcellular location">
    <subcellularLocation>
        <location evidence="1">Cytoplasm</location>
    </subcellularLocation>
</comment>
<comment type="similarity">
    <text evidence="1">Belongs to the thymidylate synthase family. Bacterial-type ThyA subfamily.</text>
</comment>
<sequence length="280" mass="31826">MRAYLDLLQHILDNGGDKGDRTGTGTRSVFGHQMRFDLSKGFPLLTTKKVHFRSIVIELLWFLKGDTNVKYLQDNKVTIWDEWATAEQTARFGRPEHELGPVYGHQWRNFGATKNADGTYNQDGFDQIKWLINEIKTNPNSRRLIVSGWNPNEAGQVALPPCHTLFQFFVQDNKLSCQLYQRSADVFLGVPFNIASYALLTHMIAQVCGLGVGDFVWTGGDTHLYANHFEQAKLQLTREPLPLCQLKLNPEVKDIFDFKFEDIEIVGYESHPAIKAPVAV</sequence>
<name>TYSY_ACIB3</name>